<gene>
    <name evidence="1" type="primary">norR</name>
    <name type="ordered locus">EcHS_A2845</name>
</gene>
<accession>A8A3I6</accession>
<evidence type="ECO:0000255" key="1">
    <source>
        <dbReference type="HAMAP-Rule" id="MF_01314"/>
    </source>
</evidence>
<sequence>MSFSVDVLANIAIELQRGIGHQDRFQRLITTLRQVLECDASALLRYDSRQFIPLAIDGLAKDVLGRRFALEGHPRLEAIARAGDVVRFPADSELPDPYDGLIPGQESLKVHACVGLPLFAGQNLIGALTLDGMQPDQFDVFSDEELRLIAALAAGALSNALLIEQLESQNMLPGDATPFEAVKQTQMIGLSPGMTQLKKEIEIVAASDLNVLISGETGTGKELVAKAIHEASPRAVNPLVYLNCAALPESVAESELFGHVKGAFTGAISNRSGKFEMADNGTLFLDEIGELSLALQAKLLRVLQYGDIQRVGDDRSLRVDVRVLAATNRDLREEVLAGRFRADLFHRLSVFPLSVPPLRERGDDVILLAGYFCEQCRLRLGLSRVVLSAGARNLLQHYRFPGNVRELEHAIHRAVVLARATRNGDEVILEAQHFAFPEVTLPPPEAAAVPVVKQNLREATEAFQRETIRQALAQNHHNWAACARMLETDVANLHRLAKRLGMKD</sequence>
<name>NORR_ECOHS</name>
<comment type="function">
    <text evidence="1">Required for the expression of anaerobic nitric oxide (NO) reductase, acts as a transcriptional activator for at least the norVW operon. Activation also requires sigma-54.</text>
</comment>
<comment type="pathway">
    <text evidence="1">Nitrogen metabolism; nitric oxide reduction.</text>
</comment>
<protein>
    <recommendedName>
        <fullName evidence="1">Anaerobic nitric oxide reductase transcription regulator NorR</fullName>
    </recommendedName>
</protein>
<feature type="chain" id="PRO_1000067512" description="Anaerobic nitric oxide reductase transcription regulator NorR">
    <location>
        <begin position="1"/>
        <end position="504"/>
    </location>
</feature>
<feature type="domain" description="Sigma-54 factor interaction" evidence="1">
    <location>
        <begin position="187"/>
        <end position="416"/>
    </location>
</feature>
<feature type="DNA-binding region" description="H-T-H motif" evidence="1">
    <location>
        <begin position="479"/>
        <end position="498"/>
    </location>
</feature>
<feature type="binding site" evidence="1">
    <location>
        <begin position="215"/>
        <end position="222"/>
    </location>
    <ligand>
        <name>ATP</name>
        <dbReference type="ChEBI" id="CHEBI:30616"/>
    </ligand>
</feature>
<feature type="binding site" evidence="1">
    <location>
        <begin position="278"/>
        <end position="287"/>
    </location>
    <ligand>
        <name>ATP</name>
        <dbReference type="ChEBI" id="CHEBI:30616"/>
    </ligand>
</feature>
<feature type="modified residue" description="4-aspartylphosphate" evidence="1">
    <location>
        <position position="57"/>
    </location>
</feature>
<proteinExistence type="inferred from homology"/>
<keyword id="KW-0067">ATP-binding</keyword>
<keyword id="KW-0238">DNA-binding</keyword>
<keyword id="KW-0547">Nucleotide-binding</keyword>
<keyword id="KW-0597">Phosphoprotein</keyword>
<keyword id="KW-0804">Transcription</keyword>
<keyword id="KW-0805">Transcription regulation</keyword>
<dbReference type="EMBL" id="CP000802">
    <property type="protein sequence ID" value="ABV07090.1"/>
    <property type="molecule type" value="Genomic_DNA"/>
</dbReference>
<dbReference type="RefSeq" id="WP_000010751.1">
    <property type="nucleotide sequence ID" value="NC_009800.1"/>
</dbReference>
<dbReference type="SMR" id="A8A3I6"/>
<dbReference type="KEGG" id="ecx:EcHS_A2845"/>
<dbReference type="HOGENOM" id="CLU_000445_125_0_6"/>
<dbReference type="UniPathway" id="UPA00638"/>
<dbReference type="GO" id="GO:0005524">
    <property type="term" value="F:ATP binding"/>
    <property type="evidence" value="ECO:0007669"/>
    <property type="project" value="UniProtKB-UniRule"/>
</dbReference>
<dbReference type="GO" id="GO:0016887">
    <property type="term" value="F:ATP hydrolysis activity"/>
    <property type="evidence" value="ECO:0007669"/>
    <property type="project" value="InterPro"/>
</dbReference>
<dbReference type="GO" id="GO:0003677">
    <property type="term" value="F:DNA binding"/>
    <property type="evidence" value="ECO:0007669"/>
    <property type="project" value="UniProtKB-KW"/>
</dbReference>
<dbReference type="GO" id="GO:0003700">
    <property type="term" value="F:DNA-binding transcription factor activity"/>
    <property type="evidence" value="ECO:0007669"/>
    <property type="project" value="UniProtKB-UniRule"/>
</dbReference>
<dbReference type="GO" id="GO:0000160">
    <property type="term" value="P:phosphorelay signal transduction system"/>
    <property type="evidence" value="ECO:0007669"/>
    <property type="project" value="UniProtKB-UniRule"/>
</dbReference>
<dbReference type="CDD" id="cd00009">
    <property type="entry name" value="AAA"/>
    <property type="match status" value="1"/>
</dbReference>
<dbReference type="FunFam" id="1.10.10.60:FF:000188">
    <property type="entry name" value="Anaerobic nitric oxide reductase transcription regulator NorR"/>
    <property type="match status" value="1"/>
</dbReference>
<dbReference type="FunFam" id="1.10.8.60:FF:000045">
    <property type="entry name" value="Anaerobic nitric oxide reductase transcription regulator NorR"/>
    <property type="match status" value="1"/>
</dbReference>
<dbReference type="FunFam" id="3.30.450.40:FF:000021">
    <property type="entry name" value="Anaerobic nitric oxide reductase transcription regulator NorR"/>
    <property type="match status" value="1"/>
</dbReference>
<dbReference type="FunFam" id="3.40.50.300:FF:000006">
    <property type="entry name" value="DNA-binding transcriptional regulator NtrC"/>
    <property type="match status" value="1"/>
</dbReference>
<dbReference type="Gene3D" id="1.10.8.60">
    <property type="match status" value="1"/>
</dbReference>
<dbReference type="Gene3D" id="3.30.450.40">
    <property type="match status" value="1"/>
</dbReference>
<dbReference type="Gene3D" id="1.10.10.60">
    <property type="entry name" value="Homeodomain-like"/>
    <property type="match status" value="1"/>
</dbReference>
<dbReference type="Gene3D" id="3.40.50.300">
    <property type="entry name" value="P-loop containing nucleotide triphosphate hydrolases"/>
    <property type="match status" value="1"/>
</dbReference>
<dbReference type="HAMAP" id="MF_01314">
    <property type="entry name" value="NorR"/>
    <property type="match status" value="1"/>
</dbReference>
<dbReference type="InterPro" id="IPR003593">
    <property type="entry name" value="AAA+_ATPase"/>
</dbReference>
<dbReference type="InterPro" id="IPR003018">
    <property type="entry name" value="GAF"/>
</dbReference>
<dbReference type="InterPro" id="IPR029016">
    <property type="entry name" value="GAF-like_dom_sf"/>
</dbReference>
<dbReference type="InterPro" id="IPR009057">
    <property type="entry name" value="Homeodomain-like_sf"/>
</dbReference>
<dbReference type="InterPro" id="IPR023944">
    <property type="entry name" value="NorR"/>
</dbReference>
<dbReference type="InterPro" id="IPR027417">
    <property type="entry name" value="P-loop_NTPase"/>
</dbReference>
<dbReference type="InterPro" id="IPR002078">
    <property type="entry name" value="Sigma_54_int"/>
</dbReference>
<dbReference type="InterPro" id="IPR025662">
    <property type="entry name" value="Sigma_54_int_dom_ATP-bd_1"/>
</dbReference>
<dbReference type="InterPro" id="IPR025943">
    <property type="entry name" value="Sigma_54_int_dom_ATP-bd_2"/>
</dbReference>
<dbReference type="InterPro" id="IPR025944">
    <property type="entry name" value="Sigma_54_int_dom_CS"/>
</dbReference>
<dbReference type="NCBIfam" id="NF003451">
    <property type="entry name" value="PRK05022.1"/>
    <property type="match status" value="1"/>
</dbReference>
<dbReference type="PANTHER" id="PTHR32071:SF35">
    <property type="entry name" value="ANAEROBIC NITRIC OXIDE REDUCTASE TRANSCRIPTION REGULATOR NORR"/>
    <property type="match status" value="1"/>
</dbReference>
<dbReference type="PANTHER" id="PTHR32071">
    <property type="entry name" value="TRANSCRIPTIONAL REGULATORY PROTEIN"/>
    <property type="match status" value="1"/>
</dbReference>
<dbReference type="Pfam" id="PF01590">
    <property type="entry name" value="GAF"/>
    <property type="match status" value="1"/>
</dbReference>
<dbReference type="Pfam" id="PF00158">
    <property type="entry name" value="Sigma54_activat"/>
    <property type="match status" value="1"/>
</dbReference>
<dbReference type="SMART" id="SM00382">
    <property type="entry name" value="AAA"/>
    <property type="match status" value="1"/>
</dbReference>
<dbReference type="SMART" id="SM00065">
    <property type="entry name" value="GAF"/>
    <property type="match status" value="1"/>
</dbReference>
<dbReference type="SUPFAM" id="SSF55781">
    <property type="entry name" value="GAF domain-like"/>
    <property type="match status" value="1"/>
</dbReference>
<dbReference type="SUPFAM" id="SSF46689">
    <property type="entry name" value="Homeodomain-like"/>
    <property type="match status" value="1"/>
</dbReference>
<dbReference type="SUPFAM" id="SSF52540">
    <property type="entry name" value="P-loop containing nucleoside triphosphate hydrolases"/>
    <property type="match status" value="1"/>
</dbReference>
<dbReference type="PROSITE" id="PS00675">
    <property type="entry name" value="SIGMA54_INTERACT_1"/>
    <property type="match status" value="1"/>
</dbReference>
<dbReference type="PROSITE" id="PS00676">
    <property type="entry name" value="SIGMA54_INTERACT_2"/>
    <property type="match status" value="1"/>
</dbReference>
<dbReference type="PROSITE" id="PS00688">
    <property type="entry name" value="SIGMA54_INTERACT_3"/>
    <property type="match status" value="1"/>
</dbReference>
<dbReference type="PROSITE" id="PS50045">
    <property type="entry name" value="SIGMA54_INTERACT_4"/>
    <property type="match status" value="1"/>
</dbReference>
<reference key="1">
    <citation type="journal article" date="2008" name="J. Bacteriol.">
        <title>The pangenome structure of Escherichia coli: comparative genomic analysis of E. coli commensal and pathogenic isolates.</title>
        <authorList>
            <person name="Rasko D.A."/>
            <person name="Rosovitz M.J."/>
            <person name="Myers G.S.A."/>
            <person name="Mongodin E.F."/>
            <person name="Fricke W.F."/>
            <person name="Gajer P."/>
            <person name="Crabtree J."/>
            <person name="Sebaihia M."/>
            <person name="Thomson N.R."/>
            <person name="Chaudhuri R."/>
            <person name="Henderson I.R."/>
            <person name="Sperandio V."/>
            <person name="Ravel J."/>
        </authorList>
    </citation>
    <scope>NUCLEOTIDE SEQUENCE [LARGE SCALE GENOMIC DNA]</scope>
    <source>
        <strain>HS</strain>
    </source>
</reference>
<organism>
    <name type="scientific">Escherichia coli O9:H4 (strain HS)</name>
    <dbReference type="NCBI Taxonomy" id="331112"/>
    <lineage>
        <taxon>Bacteria</taxon>
        <taxon>Pseudomonadati</taxon>
        <taxon>Pseudomonadota</taxon>
        <taxon>Gammaproteobacteria</taxon>
        <taxon>Enterobacterales</taxon>
        <taxon>Enterobacteriaceae</taxon>
        <taxon>Escherichia</taxon>
    </lineage>
</organism>